<reference key="1">
    <citation type="journal article" date="2006" name="PLoS Biol.">
        <title>Metabolic complementarity and genomics of the dual bacterial symbiosis of sharpshooters.</title>
        <authorList>
            <person name="Wu D."/>
            <person name="Daugherty S.C."/>
            <person name="Van Aken S.E."/>
            <person name="Pai G.H."/>
            <person name="Watkins K.L."/>
            <person name="Khouri H."/>
            <person name="Tallon L.J."/>
            <person name="Zaborsky J.M."/>
            <person name="Dunbar H.E."/>
            <person name="Tran P.L."/>
            <person name="Moran N.A."/>
            <person name="Eisen J.A."/>
        </authorList>
    </citation>
    <scope>NUCLEOTIDE SEQUENCE [LARGE SCALE GENOMIC DNA]</scope>
</reference>
<gene>
    <name evidence="1" type="primary">mnmG</name>
    <name evidence="1" type="synonym">gidA</name>
    <name type="ordered locus">BCI_0148</name>
</gene>
<keyword id="KW-0963">Cytoplasm</keyword>
<keyword id="KW-0274">FAD</keyword>
<keyword id="KW-0285">Flavoprotein</keyword>
<keyword id="KW-0520">NAD</keyword>
<keyword id="KW-1185">Reference proteome</keyword>
<keyword id="KW-0819">tRNA processing</keyword>
<evidence type="ECO:0000255" key="1">
    <source>
        <dbReference type="HAMAP-Rule" id="MF_00129"/>
    </source>
</evidence>
<feature type="chain" id="PRO_1000016552" description="tRNA uridine 5-carboxymethylaminomethyl modification enzyme MnmG">
    <location>
        <begin position="1"/>
        <end position="631"/>
    </location>
</feature>
<feature type="binding site" evidence="1">
    <location>
        <begin position="13"/>
        <end position="18"/>
    </location>
    <ligand>
        <name>FAD</name>
        <dbReference type="ChEBI" id="CHEBI:57692"/>
    </ligand>
</feature>
<feature type="binding site" evidence="1">
    <location>
        <position position="125"/>
    </location>
    <ligand>
        <name>FAD</name>
        <dbReference type="ChEBI" id="CHEBI:57692"/>
    </ligand>
</feature>
<feature type="binding site" evidence="1">
    <location>
        <position position="180"/>
    </location>
    <ligand>
        <name>FAD</name>
        <dbReference type="ChEBI" id="CHEBI:57692"/>
    </ligand>
</feature>
<feature type="binding site" evidence="1">
    <location>
        <begin position="273"/>
        <end position="287"/>
    </location>
    <ligand>
        <name>NAD(+)</name>
        <dbReference type="ChEBI" id="CHEBI:57540"/>
    </ligand>
</feature>
<feature type="binding site" evidence="1">
    <location>
        <position position="370"/>
    </location>
    <ligand>
        <name>FAD</name>
        <dbReference type="ChEBI" id="CHEBI:57692"/>
    </ligand>
</feature>
<dbReference type="EMBL" id="CP000238">
    <property type="protein sequence ID" value="ABF14076.1"/>
    <property type="molecule type" value="Genomic_DNA"/>
</dbReference>
<dbReference type="RefSeq" id="WP_011520350.1">
    <property type="nucleotide sequence ID" value="NC_007984.1"/>
</dbReference>
<dbReference type="SMR" id="Q1LTU7"/>
<dbReference type="STRING" id="374463.BCI_0148"/>
<dbReference type="KEGG" id="bci:BCI_0148"/>
<dbReference type="HOGENOM" id="CLU_007831_2_2_6"/>
<dbReference type="OrthoDB" id="9815560at2"/>
<dbReference type="Proteomes" id="UP000002427">
    <property type="component" value="Chromosome"/>
</dbReference>
<dbReference type="GO" id="GO:0005829">
    <property type="term" value="C:cytosol"/>
    <property type="evidence" value="ECO:0007669"/>
    <property type="project" value="TreeGrafter"/>
</dbReference>
<dbReference type="GO" id="GO:0050660">
    <property type="term" value="F:flavin adenine dinucleotide binding"/>
    <property type="evidence" value="ECO:0007669"/>
    <property type="project" value="UniProtKB-UniRule"/>
</dbReference>
<dbReference type="GO" id="GO:0030488">
    <property type="term" value="P:tRNA methylation"/>
    <property type="evidence" value="ECO:0007669"/>
    <property type="project" value="TreeGrafter"/>
</dbReference>
<dbReference type="GO" id="GO:0002098">
    <property type="term" value="P:tRNA wobble uridine modification"/>
    <property type="evidence" value="ECO:0007669"/>
    <property type="project" value="InterPro"/>
</dbReference>
<dbReference type="FunFam" id="1.10.10.1800:FF:000001">
    <property type="entry name" value="tRNA uridine 5-carboxymethylaminomethyl modification enzyme MnmG"/>
    <property type="match status" value="1"/>
</dbReference>
<dbReference type="FunFam" id="1.10.150.570:FF:000001">
    <property type="entry name" value="tRNA uridine 5-carboxymethylaminomethyl modification enzyme MnmG"/>
    <property type="match status" value="1"/>
</dbReference>
<dbReference type="FunFam" id="3.50.50.60:FF:000002">
    <property type="entry name" value="tRNA uridine 5-carboxymethylaminomethyl modification enzyme MnmG"/>
    <property type="match status" value="1"/>
</dbReference>
<dbReference type="FunFam" id="3.50.50.60:FF:000010">
    <property type="entry name" value="tRNA uridine 5-carboxymethylaminomethyl modification enzyme MnmG"/>
    <property type="match status" value="1"/>
</dbReference>
<dbReference type="Gene3D" id="3.50.50.60">
    <property type="entry name" value="FAD/NAD(P)-binding domain"/>
    <property type="match status" value="2"/>
</dbReference>
<dbReference type="Gene3D" id="1.10.150.570">
    <property type="entry name" value="GidA associated domain, C-terminal subdomain"/>
    <property type="match status" value="1"/>
</dbReference>
<dbReference type="Gene3D" id="1.10.10.1800">
    <property type="entry name" value="tRNA uridine 5-carboxymethylaminomethyl modification enzyme MnmG/GidA"/>
    <property type="match status" value="1"/>
</dbReference>
<dbReference type="HAMAP" id="MF_00129">
    <property type="entry name" value="MnmG_GidA"/>
    <property type="match status" value="1"/>
</dbReference>
<dbReference type="InterPro" id="IPR036188">
    <property type="entry name" value="FAD/NAD-bd_sf"/>
</dbReference>
<dbReference type="InterPro" id="IPR049312">
    <property type="entry name" value="GIDA_C_N"/>
</dbReference>
<dbReference type="InterPro" id="IPR004416">
    <property type="entry name" value="MnmG"/>
</dbReference>
<dbReference type="InterPro" id="IPR002218">
    <property type="entry name" value="MnmG-rel"/>
</dbReference>
<dbReference type="InterPro" id="IPR020595">
    <property type="entry name" value="MnmG-rel_CS"/>
</dbReference>
<dbReference type="InterPro" id="IPR026904">
    <property type="entry name" value="MnmG_C"/>
</dbReference>
<dbReference type="InterPro" id="IPR047001">
    <property type="entry name" value="MnmG_C_subdom"/>
</dbReference>
<dbReference type="InterPro" id="IPR044920">
    <property type="entry name" value="MnmG_C_subdom_sf"/>
</dbReference>
<dbReference type="InterPro" id="IPR040131">
    <property type="entry name" value="MnmG_N"/>
</dbReference>
<dbReference type="NCBIfam" id="TIGR00136">
    <property type="entry name" value="mnmG_gidA"/>
    <property type="match status" value="1"/>
</dbReference>
<dbReference type="PANTHER" id="PTHR11806">
    <property type="entry name" value="GLUCOSE INHIBITED DIVISION PROTEIN A"/>
    <property type="match status" value="1"/>
</dbReference>
<dbReference type="PANTHER" id="PTHR11806:SF0">
    <property type="entry name" value="PROTEIN MTO1 HOMOLOG, MITOCHONDRIAL"/>
    <property type="match status" value="1"/>
</dbReference>
<dbReference type="Pfam" id="PF01134">
    <property type="entry name" value="GIDA"/>
    <property type="match status" value="1"/>
</dbReference>
<dbReference type="Pfam" id="PF21680">
    <property type="entry name" value="GIDA_C_1st"/>
    <property type="match status" value="1"/>
</dbReference>
<dbReference type="Pfam" id="PF13932">
    <property type="entry name" value="SAM_GIDA_C"/>
    <property type="match status" value="1"/>
</dbReference>
<dbReference type="SMART" id="SM01228">
    <property type="entry name" value="GIDA_assoc_3"/>
    <property type="match status" value="1"/>
</dbReference>
<dbReference type="SUPFAM" id="SSF51905">
    <property type="entry name" value="FAD/NAD(P)-binding domain"/>
    <property type="match status" value="1"/>
</dbReference>
<dbReference type="PROSITE" id="PS01281">
    <property type="entry name" value="GIDA_2"/>
    <property type="match status" value="1"/>
</dbReference>
<sequence>MLKNYFFDVIIIGGGHAGTEAAVASAKIGCNTLLLTHNIKTIGEMSCNPAIGGIGKGHLAKEVDAMGGIMAKAIDAAGIQFRILNASKGPAVRATRAQADRYLYRKAVYNMLKNTNNLLVLQQFVENLIIKNNNVIGVISKAKDKFYANSVILTVGTFLDGKIHIGLNSYPGGRTGDLSSISLSSNLRKLPFRVKRLKTGTPPRIHASTVNFNILTKQESDNPLPVFSFTGSVSEHPRQIPCYITYTNKNTHDIIYNNLHYSPIYTKNIEGIGPRYCPSIEDKIIHFAHRDSHQIFLEPEGLMSNIIYPNGISTSLPVDIQLKIVQSIEGLEKASIIQPGYAIEYDFFDPRDLKNTLESKIINGLFFAGQINGTTGYEEAAAQGLIAGINAAKKVLEQDSWYPNRSQAYIGVLIDDLCLQGIEEPYRMFTSRAEYRLSLREDNADLRLTEIARKLGLVNENHWHKFCIKLDYIERERQRLRNLWVQPNTIGIQDLNQLLKKPIMCKINGEELLRRPEINYKTLTNLSFFQPTLKNIQAAEQIEIQIKYEGYIAQQQEQILRQLNYEQTLLPKNMDFSLVTGLSNEAISQLNNHQPYSIGQALRISGITPIAISLLLLWLKKNNLLANKINK</sequence>
<comment type="function">
    <text evidence="1">NAD-binding protein involved in the addition of a carboxymethylaminomethyl (cmnm) group at the wobble position (U34) of certain tRNAs, forming tRNA-cmnm(5)s(2)U34.</text>
</comment>
<comment type="cofactor">
    <cofactor evidence="1">
        <name>FAD</name>
        <dbReference type="ChEBI" id="CHEBI:57692"/>
    </cofactor>
</comment>
<comment type="subunit">
    <text evidence="1">Homodimer. Heterotetramer of two MnmE and two MnmG subunits.</text>
</comment>
<comment type="subcellular location">
    <subcellularLocation>
        <location evidence="1">Cytoplasm</location>
    </subcellularLocation>
</comment>
<comment type="similarity">
    <text evidence="1">Belongs to the MnmG family.</text>
</comment>
<organism>
    <name type="scientific">Baumannia cicadellinicola subsp. Homalodisca coagulata</name>
    <dbReference type="NCBI Taxonomy" id="374463"/>
    <lineage>
        <taxon>Bacteria</taxon>
        <taxon>Pseudomonadati</taxon>
        <taxon>Pseudomonadota</taxon>
        <taxon>Gammaproteobacteria</taxon>
        <taxon>Candidatus Palibaumannia</taxon>
    </lineage>
</organism>
<name>MNMG_BAUCH</name>
<accession>Q1LTU7</accession>
<proteinExistence type="inferred from homology"/>
<protein>
    <recommendedName>
        <fullName evidence="1">tRNA uridine 5-carboxymethylaminomethyl modification enzyme MnmG</fullName>
    </recommendedName>
    <alternativeName>
        <fullName evidence="1">Glucose-inhibited division protein A</fullName>
    </alternativeName>
</protein>